<accession>Q9HQ86</accession>
<proteinExistence type="inferred from homology"/>
<protein>
    <recommendedName>
        <fullName evidence="1">Ribonuclease P protein component 2</fullName>
        <shortName evidence="1">RNase P component 2</shortName>
        <ecNumber evidence="1">3.1.26.5</ecNumber>
    </recommendedName>
    <alternativeName>
        <fullName evidence="1">Pop5</fullName>
    </alternativeName>
</protein>
<dbReference type="EC" id="3.1.26.5" evidence="1"/>
<dbReference type="EMBL" id="AE004437">
    <property type="protein sequence ID" value="AAG19630.1"/>
    <property type="molecule type" value="Genomic_DNA"/>
</dbReference>
<dbReference type="PIR" id="B84283">
    <property type="entry name" value="B84283"/>
</dbReference>
<dbReference type="RefSeq" id="WP_010902926.1">
    <property type="nucleotide sequence ID" value="NC_002607.1"/>
</dbReference>
<dbReference type="SMR" id="Q9HQ86"/>
<dbReference type="STRING" id="64091.VNG_1279H"/>
<dbReference type="PaxDb" id="64091-VNG_1279H"/>
<dbReference type="KEGG" id="hal:VNG_1279H"/>
<dbReference type="PATRIC" id="fig|64091.14.peg.978"/>
<dbReference type="HOGENOM" id="CLU_137733_0_0_2"/>
<dbReference type="InParanoid" id="Q9HQ86"/>
<dbReference type="OrthoDB" id="19261at2157"/>
<dbReference type="Proteomes" id="UP000000554">
    <property type="component" value="Chromosome"/>
</dbReference>
<dbReference type="GO" id="GO:0005737">
    <property type="term" value="C:cytoplasm"/>
    <property type="evidence" value="ECO:0007669"/>
    <property type="project" value="UniProtKB-SubCell"/>
</dbReference>
<dbReference type="GO" id="GO:0030677">
    <property type="term" value="C:ribonuclease P complex"/>
    <property type="evidence" value="ECO:0007669"/>
    <property type="project" value="UniProtKB-UniRule"/>
</dbReference>
<dbReference type="GO" id="GO:0004526">
    <property type="term" value="F:ribonuclease P activity"/>
    <property type="evidence" value="ECO:0007669"/>
    <property type="project" value="UniProtKB-UniRule"/>
</dbReference>
<dbReference type="GO" id="GO:0001682">
    <property type="term" value="P:tRNA 5'-leader removal"/>
    <property type="evidence" value="ECO:0007669"/>
    <property type="project" value="UniProtKB-UniRule"/>
</dbReference>
<dbReference type="Gene3D" id="3.30.70.3250">
    <property type="entry name" value="Ribonuclease P, Pop5 subunit"/>
    <property type="match status" value="1"/>
</dbReference>
<dbReference type="HAMAP" id="MF_00755">
    <property type="entry name" value="RNase_P_2"/>
    <property type="match status" value="1"/>
</dbReference>
<dbReference type="InterPro" id="IPR002759">
    <property type="entry name" value="Pop5/Rpp14/Rnp2-like"/>
</dbReference>
<dbReference type="InterPro" id="IPR038085">
    <property type="entry name" value="Rnp2-like_sf"/>
</dbReference>
<dbReference type="Pfam" id="PF01900">
    <property type="entry name" value="RNase_P_Rpp14"/>
    <property type="match status" value="1"/>
</dbReference>
<dbReference type="SUPFAM" id="SSF160350">
    <property type="entry name" value="Rnp2-like"/>
    <property type="match status" value="1"/>
</dbReference>
<comment type="function">
    <text evidence="1">Part of ribonuclease P, a protein complex that generates mature tRNA molecules by cleaving their 5'-ends.</text>
</comment>
<comment type="catalytic activity">
    <reaction evidence="1">
        <text>Endonucleolytic cleavage of RNA, removing 5'-extranucleotides from tRNA precursor.</text>
        <dbReference type="EC" id="3.1.26.5"/>
    </reaction>
</comment>
<comment type="subunit">
    <text evidence="1">Consists of a catalytic RNA component and at least 4-5 protein subunits.</text>
</comment>
<comment type="subcellular location">
    <subcellularLocation>
        <location evidence="1">Cytoplasm</location>
    </subcellularLocation>
</comment>
<comment type="similarity">
    <text evidence="1">Belongs to the eukaryotic/archaeal RNase P protein component 2 family.</text>
</comment>
<reference key="1">
    <citation type="journal article" date="2000" name="Proc. Natl. Acad. Sci. U.S.A.">
        <title>Genome sequence of Halobacterium species NRC-1.</title>
        <authorList>
            <person name="Ng W.V."/>
            <person name="Kennedy S.P."/>
            <person name="Mahairas G.G."/>
            <person name="Berquist B."/>
            <person name="Pan M."/>
            <person name="Shukla H.D."/>
            <person name="Lasky S.R."/>
            <person name="Baliga N.S."/>
            <person name="Thorsson V."/>
            <person name="Sbrogna J."/>
            <person name="Swartzell S."/>
            <person name="Weir D."/>
            <person name="Hall J."/>
            <person name="Dahl T.A."/>
            <person name="Welti R."/>
            <person name="Goo Y.A."/>
            <person name="Leithauser B."/>
            <person name="Keller K."/>
            <person name="Cruz R."/>
            <person name="Danson M.J."/>
            <person name="Hough D.W."/>
            <person name="Maddocks D.G."/>
            <person name="Jablonski P.E."/>
            <person name="Krebs M.P."/>
            <person name="Angevine C.M."/>
            <person name="Dale H."/>
            <person name="Isenbarger T.A."/>
            <person name="Peck R.F."/>
            <person name="Pohlschroder M."/>
            <person name="Spudich J.L."/>
            <person name="Jung K.-H."/>
            <person name="Alam M."/>
            <person name="Freitas T."/>
            <person name="Hou S."/>
            <person name="Daniels C.J."/>
            <person name="Dennis P.P."/>
            <person name="Omer A.D."/>
            <person name="Ebhardt H."/>
            <person name="Lowe T.M."/>
            <person name="Liang P."/>
            <person name="Riley M."/>
            <person name="Hood L."/>
            <person name="DasSarma S."/>
        </authorList>
    </citation>
    <scope>NUCLEOTIDE SEQUENCE [LARGE SCALE GENOMIC DNA]</scope>
    <source>
        <strain>ATCC 700922 / JCM 11081 / NRC-1</strain>
    </source>
</reference>
<sequence length="164" mass="17891">MKHLPKHVRPRWRYLAVGIEAWPDAGIERSDFQRALWFAAGNLLGDPGSADAGVRVVAYSFRDGRGEALVRARRGTVSRARAAVACVSAVREHPVRVCVRGVSGTMRAARERYLDGLDTPERRSDVAFDGDARDGVCRGENVDVVAGDDGWVGARRRDCGTDGE</sequence>
<keyword id="KW-0963">Cytoplasm</keyword>
<keyword id="KW-0255">Endonuclease</keyword>
<keyword id="KW-0378">Hydrolase</keyword>
<keyword id="KW-0540">Nuclease</keyword>
<keyword id="KW-1185">Reference proteome</keyword>
<keyword id="KW-0819">tRNA processing</keyword>
<gene>
    <name evidence="1" type="primary">rnp2</name>
    <name type="ordered locus">VNG_1279H</name>
</gene>
<organism>
    <name type="scientific">Halobacterium salinarum (strain ATCC 700922 / JCM 11081 / NRC-1)</name>
    <name type="common">Halobacterium halobium</name>
    <dbReference type="NCBI Taxonomy" id="64091"/>
    <lineage>
        <taxon>Archaea</taxon>
        <taxon>Methanobacteriati</taxon>
        <taxon>Methanobacteriota</taxon>
        <taxon>Stenosarchaea group</taxon>
        <taxon>Halobacteria</taxon>
        <taxon>Halobacteriales</taxon>
        <taxon>Halobacteriaceae</taxon>
        <taxon>Halobacterium</taxon>
        <taxon>Halobacterium salinarum NRC-34001</taxon>
    </lineage>
</organism>
<name>RNP2_HALSA</name>
<feature type="chain" id="PRO_0000140018" description="Ribonuclease P protein component 2">
    <location>
        <begin position="1"/>
        <end position="164"/>
    </location>
</feature>
<evidence type="ECO:0000255" key="1">
    <source>
        <dbReference type="HAMAP-Rule" id="MF_00755"/>
    </source>
</evidence>